<feature type="chain" id="PRO_0000290823" description="Small ribosomal subunit protein uS8">
    <location>
        <begin position="1"/>
        <end position="132"/>
    </location>
</feature>
<proteinExistence type="inferred from homology"/>
<protein>
    <recommendedName>
        <fullName evidence="1">Small ribosomal subunit protein uS8</fullName>
    </recommendedName>
    <alternativeName>
        <fullName evidence="2">30S ribosomal protein S8</fullName>
    </alternativeName>
</protein>
<sequence>MVMTDPIADLLTRVRNANSVRHEVVEVPSSSVKKAIVNILLQEGYLKGVEEYNDGVVPMMRLTLKYGANNERVITGLKRISKPGLRVYCKKDEVPRVLNGLGIALISTSKGLVVDREARKLGLGGEVICYVW</sequence>
<organism>
    <name type="scientific">Clostridium perfringens (strain ATCC 13124 / DSM 756 / JCM 1290 / NCIMB 6125 / NCTC 8237 / Type A)</name>
    <dbReference type="NCBI Taxonomy" id="195103"/>
    <lineage>
        <taxon>Bacteria</taxon>
        <taxon>Bacillati</taxon>
        <taxon>Bacillota</taxon>
        <taxon>Clostridia</taxon>
        <taxon>Eubacteriales</taxon>
        <taxon>Clostridiaceae</taxon>
        <taxon>Clostridium</taxon>
    </lineage>
</organism>
<dbReference type="EMBL" id="CP000246">
    <property type="protein sequence ID" value="ABG83753.1"/>
    <property type="molecule type" value="Genomic_DNA"/>
</dbReference>
<dbReference type="RefSeq" id="WP_003454446.1">
    <property type="nucleotide sequence ID" value="NC_008261.1"/>
</dbReference>
<dbReference type="SMR" id="Q0TMR0"/>
<dbReference type="STRING" id="195103.CPF_2700"/>
<dbReference type="PaxDb" id="195103-CPF_2700"/>
<dbReference type="GeneID" id="93001023"/>
<dbReference type="KEGG" id="cpf:CPF_2700"/>
<dbReference type="eggNOG" id="COG0096">
    <property type="taxonomic scope" value="Bacteria"/>
</dbReference>
<dbReference type="HOGENOM" id="CLU_098428_0_2_9"/>
<dbReference type="Proteomes" id="UP000001823">
    <property type="component" value="Chromosome"/>
</dbReference>
<dbReference type="GO" id="GO:1990904">
    <property type="term" value="C:ribonucleoprotein complex"/>
    <property type="evidence" value="ECO:0007669"/>
    <property type="project" value="UniProtKB-KW"/>
</dbReference>
<dbReference type="GO" id="GO:0005840">
    <property type="term" value="C:ribosome"/>
    <property type="evidence" value="ECO:0007669"/>
    <property type="project" value="UniProtKB-KW"/>
</dbReference>
<dbReference type="GO" id="GO:0019843">
    <property type="term" value="F:rRNA binding"/>
    <property type="evidence" value="ECO:0007669"/>
    <property type="project" value="UniProtKB-UniRule"/>
</dbReference>
<dbReference type="GO" id="GO:0003735">
    <property type="term" value="F:structural constituent of ribosome"/>
    <property type="evidence" value="ECO:0007669"/>
    <property type="project" value="InterPro"/>
</dbReference>
<dbReference type="GO" id="GO:0006412">
    <property type="term" value="P:translation"/>
    <property type="evidence" value="ECO:0007669"/>
    <property type="project" value="UniProtKB-UniRule"/>
</dbReference>
<dbReference type="FunFam" id="3.30.1370.30:FF:000002">
    <property type="entry name" value="30S ribosomal protein S8"/>
    <property type="match status" value="1"/>
</dbReference>
<dbReference type="FunFam" id="3.30.1490.10:FF:000001">
    <property type="entry name" value="30S ribosomal protein S8"/>
    <property type="match status" value="1"/>
</dbReference>
<dbReference type="Gene3D" id="3.30.1370.30">
    <property type="match status" value="1"/>
</dbReference>
<dbReference type="Gene3D" id="3.30.1490.10">
    <property type="match status" value="1"/>
</dbReference>
<dbReference type="HAMAP" id="MF_01302_B">
    <property type="entry name" value="Ribosomal_uS8_B"/>
    <property type="match status" value="1"/>
</dbReference>
<dbReference type="InterPro" id="IPR000630">
    <property type="entry name" value="Ribosomal_uS8"/>
</dbReference>
<dbReference type="InterPro" id="IPR047863">
    <property type="entry name" value="Ribosomal_uS8_CS"/>
</dbReference>
<dbReference type="InterPro" id="IPR035987">
    <property type="entry name" value="Ribosomal_uS8_sf"/>
</dbReference>
<dbReference type="NCBIfam" id="NF001109">
    <property type="entry name" value="PRK00136.1"/>
    <property type="match status" value="1"/>
</dbReference>
<dbReference type="PANTHER" id="PTHR11758">
    <property type="entry name" value="40S RIBOSOMAL PROTEIN S15A"/>
    <property type="match status" value="1"/>
</dbReference>
<dbReference type="Pfam" id="PF00410">
    <property type="entry name" value="Ribosomal_S8"/>
    <property type="match status" value="1"/>
</dbReference>
<dbReference type="SUPFAM" id="SSF56047">
    <property type="entry name" value="Ribosomal protein S8"/>
    <property type="match status" value="1"/>
</dbReference>
<dbReference type="PROSITE" id="PS00053">
    <property type="entry name" value="RIBOSOMAL_S8"/>
    <property type="match status" value="1"/>
</dbReference>
<evidence type="ECO:0000255" key="1">
    <source>
        <dbReference type="HAMAP-Rule" id="MF_01302"/>
    </source>
</evidence>
<evidence type="ECO:0000305" key="2"/>
<name>RS8_CLOP1</name>
<comment type="function">
    <text evidence="1">One of the primary rRNA binding proteins, it binds directly to 16S rRNA central domain where it helps coordinate assembly of the platform of the 30S subunit.</text>
</comment>
<comment type="subunit">
    <text evidence="1">Part of the 30S ribosomal subunit. Contacts proteins S5 and S12.</text>
</comment>
<comment type="similarity">
    <text evidence="1">Belongs to the universal ribosomal protein uS8 family.</text>
</comment>
<gene>
    <name evidence="1" type="primary">rpsH</name>
    <name type="ordered locus">CPF_2700</name>
</gene>
<keyword id="KW-0687">Ribonucleoprotein</keyword>
<keyword id="KW-0689">Ribosomal protein</keyword>
<keyword id="KW-0694">RNA-binding</keyword>
<keyword id="KW-0699">rRNA-binding</keyword>
<reference key="1">
    <citation type="journal article" date="2006" name="Genome Res.">
        <title>Skewed genomic variability in strains of the toxigenic bacterial pathogen, Clostridium perfringens.</title>
        <authorList>
            <person name="Myers G.S.A."/>
            <person name="Rasko D.A."/>
            <person name="Cheung J.K."/>
            <person name="Ravel J."/>
            <person name="Seshadri R."/>
            <person name="DeBoy R.T."/>
            <person name="Ren Q."/>
            <person name="Varga J."/>
            <person name="Awad M.M."/>
            <person name="Brinkac L.M."/>
            <person name="Daugherty S.C."/>
            <person name="Haft D.H."/>
            <person name="Dodson R.J."/>
            <person name="Madupu R."/>
            <person name="Nelson W.C."/>
            <person name="Rosovitz M.J."/>
            <person name="Sullivan S.A."/>
            <person name="Khouri H."/>
            <person name="Dimitrov G.I."/>
            <person name="Watkins K.L."/>
            <person name="Mulligan S."/>
            <person name="Benton J."/>
            <person name="Radune D."/>
            <person name="Fisher D.J."/>
            <person name="Atkins H.S."/>
            <person name="Hiscox T."/>
            <person name="Jost B.H."/>
            <person name="Billington S.J."/>
            <person name="Songer J.G."/>
            <person name="McClane B.A."/>
            <person name="Titball R.W."/>
            <person name="Rood J.I."/>
            <person name="Melville S.B."/>
            <person name="Paulsen I.T."/>
        </authorList>
    </citation>
    <scope>NUCLEOTIDE SEQUENCE [LARGE SCALE GENOMIC DNA]</scope>
    <source>
        <strain>ATCC 13124 / DSM 756 / JCM 1290 / NCIMB 6125 / NCTC 8237 / S 107 / Type A</strain>
    </source>
</reference>
<accession>Q0TMR0</accession>